<organism>
    <name type="scientific">Escherichia coli (strain K12 / DH10B)</name>
    <dbReference type="NCBI Taxonomy" id="316385"/>
    <lineage>
        <taxon>Bacteria</taxon>
        <taxon>Pseudomonadati</taxon>
        <taxon>Pseudomonadota</taxon>
        <taxon>Gammaproteobacteria</taxon>
        <taxon>Enterobacterales</taxon>
        <taxon>Enterobacteriaceae</taxon>
        <taxon>Escherichia</taxon>
    </lineage>
</organism>
<feature type="chain" id="PRO_0000351692" description="L-rhamnonate dehydratase">
    <location>
        <begin position="1"/>
        <end position="405"/>
    </location>
</feature>
<feature type="active site" description="Proton acceptor" evidence="1">
    <location>
        <position position="329"/>
    </location>
</feature>
<feature type="binding site" evidence="1">
    <location>
        <position position="33"/>
    </location>
    <ligand>
        <name>substrate</name>
    </ligand>
</feature>
<feature type="binding site" evidence="1">
    <location>
        <position position="59"/>
    </location>
    <ligand>
        <name>substrate</name>
    </ligand>
</feature>
<feature type="binding site" evidence="1">
    <location>
        <position position="226"/>
    </location>
    <ligand>
        <name>Mg(2+)</name>
        <dbReference type="ChEBI" id="CHEBI:18420"/>
    </ligand>
</feature>
<feature type="binding site" evidence="1">
    <location>
        <position position="252"/>
    </location>
    <ligand>
        <name>Mg(2+)</name>
        <dbReference type="ChEBI" id="CHEBI:18420"/>
    </ligand>
</feature>
<feature type="binding site" evidence="1">
    <location>
        <position position="280"/>
    </location>
    <ligand>
        <name>Mg(2+)</name>
        <dbReference type="ChEBI" id="CHEBI:18420"/>
    </ligand>
</feature>
<feature type="binding site" evidence="1">
    <location>
        <position position="349"/>
    </location>
    <ligand>
        <name>substrate</name>
    </ligand>
</feature>
<feature type="site" description="Increases basicity of active site His" evidence="1">
    <location>
        <position position="302"/>
    </location>
</feature>
<feature type="site" description="Transition state stabilizer" evidence="1">
    <location>
        <position position="349"/>
    </location>
</feature>
<name>RHMD_ECODH</name>
<protein>
    <recommendedName>
        <fullName evidence="1">L-rhamnonate dehydratase</fullName>
        <shortName evidence="1">RhamD</shortName>
        <ecNumber evidence="1">4.2.1.90</ecNumber>
    </recommendedName>
</protein>
<sequence>MENIMTLPKIKQVRAWFTGGATAEKGAGGGDYHDQGANHWIDDHIATPMSKYRDYEQSRQSFGINVLGTLVVEVEAENGQTGFAVSTAGEMGCFIVEKHLNRFIEGKCVSDIKLIHDQMLSATLYYSGSGGLVMNTISCVDLALWDLFGKVVGLPVYKLLGGAVRDEIQFYATGARPDLAKEMGFIGGKMPTHWGPHDGDAGIRKDAAMVADMREKCGEDFWLMLDCWMSQDVNYATKLAHACAPYNLKWIEECLPPQQYESYRELKRNAPVGMMVTSGEHHGTLQSFRTLSETGIDIMQPDVGWCGGLTTLVEIAAIAKSRGQLVVPHGSSVYSHHAVITFTNTPFSEFLMTSPDCSTMRPQFDPILLNEPVPVNGRIHKSVLDKPGFGVELNRDCNLKRPYSH</sequence>
<comment type="function">
    <text evidence="1">Catalyzes the dehydration of L-rhamnonate to 2-keto-3-deoxy-L-rhamnonate (KDR).</text>
</comment>
<comment type="catalytic activity">
    <reaction evidence="1">
        <text>L-rhamnonate = 2-dehydro-3-deoxy-L-rhamnonate + H2O</text>
        <dbReference type="Rhea" id="RHEA:23080"/>
        <dbReference type="ChEBI" id="CHEBI:15377"/>
        <dbReference type="ChEBI" id="CHEBI:58118"/>
        <dbReference type="ChEBI" id="CHEBI:58371"/>
        <dbReference type="EC" id="4.2.1.90"/>
    </reaction>
</comment>
<comment type="cofactor">
    <cofactor evidence="1">
        <name>Mg(2+)</name>
        <dbReference type="ChEBI" id="CHEBI:18420"/>
    </cofactor>
    <text evidence="1">Binds 1 Mg(2+) ion per subunit.</text>
</comment>
<comment type="subunit">
    <text evidence="1">Homooctamer; tetramer of dimers.</text>
</comment>
<comment type="miscellaneous">
    <text evidence="1">Reaction proceeds via a syn dehydration.</text>
</comment>
<comment type="similarity">
    <text evidence="1">Belongs to the mandelate racemase/muconate lactonizing enzyme family. RhamD subfamily.</text>
</comment>
<accession>B1X8W0</accession>
<reference key="1">
    <citation type="journal article" date="2008" name="J. Bacteriol.">
        <title>The complete genome sequence of Escherichia coli DH10B: insights into the biology of a laboratory workhorse.</title>
        <authorList>
            <person name="Durfee T."/>
            <person name="Nelson R."/>
            <person name="Baldwin S."/>
            <person name="Plunkett G. III"/>
            <person name="Burland V."/>
            <person name="Mau B."/>
            <person name="Petrosino J.F."/>
            <person name="Qin X."/>
            <person name="Muzny D.M."/>
            <person name="Ayele M."/>
            <person name="Gibbs R.A."/>
            <person name="Csorgo B."/>
            <person name="Posfai G."/>
            <person name="Weinstock G.M."/>
            <person name="Blattner F.R."/>
        </authorList>
    </citation>
    <scope>NUCLEOTIDE SEQUENCE [LARGE SCALE GENOMIC DNA]</scope>
    <source>
        <strain>K12 / DH10B</strain>
    </source>
</reference>
<dbReference type="EC" id="4.2.1.90" evidence="1"/>
<dbReference type="EMBL" id="CP000948">
    <property type="protein sequence ID" value="ACB03407.1"/>
    <property type="molecule type" value="Genomic_DNA"/>
</dbReference>
<dbReference type="SMR" id="B1X8W0"/>
<dbReference type="KEGG" id="ecd:ECDH10B_2407"/>
<dbReference type="HOGENOM" id="CLU_030273_1_0_6"/>
<dbReference type="GO" id="GO:0050032">
    <property type="term" value="F:L-rhamnonate dehydratase activity"/>
    <property type="evidence" value="ECO:0007669"/>
    <property type="project" value="UniProtKB-UniRule"/>
</dbReference>
<dbReference type="GO" id="GO:0000287">
    <property type="term" value="F:magnesium ion binding"/>
    <property type="evidence" value="ECO:0007669"/>
    <property type="project" value="UniProtKB-UniRule"/>
</dbReference>
<dbReference type="GO" id="GO:0009063">
    <property type="term" value="P:amino acid catabolic process"/>
    <property type="evidence" value="ECO:0007669"/>
    <property type="project" value="InterPro"/>
</dbReference>
<dbReference type="GO" id="GO:0016052">
    <property type="term" value="P:carbohydrate catabolic process"/>
    <property type="evidence" value="ECO:0007669"/>
    <property type="project" value="TreeGrafter"/>
</dbReference>
<dbReference type="CDD" id="cd03327">
    <property type="entry name" value="MR_like_2"/>
    <property type="match status" value="1"/>
</dbReference>
<dbReference type="FunFam" id="3.30.390.10:FF:000007">
    <property type="entry name" value="L-rhamnonate dehydratase"/>
    <property type="match status" value="1"/>
</dbReference>
<dbReference type="FunFam" id="3.20.20.120:FF:000005">
    <property type="entry name" value="Putative L-rhamnonate dehydratase"/>
    <property type="match status" value="1"/>
</dbReference>
<dbReference type="Gene3D" id="3.20.20.120">
    <property type="entry name" value="Enolase-like C-terminal domain"/>
    <property type="match status" value="1"/>
</dbReference>
<dbReference type="Gene3D" id="3.30.390.10">
    <property type="entry name" value="Enolase-like, N-terminal domain"/>
    <property type="match status" value="1"/>
</dbReference>
<dbReference type="HAMAP" id="MF_01288">
    <property type="entry name" value="Rhamnon_dehydrat"/>
    <property type="match status" value="1"/>
</dbReference>
<dbReference type="InterPro" id="IPR036849">
    <property type="entry name" value="Enolase-like_C_sf"/>
</dbReference>
<dbReference type="InterPro" id="IPR029017">
    <property type="entry name" value="Enolase-like_N"/>
</dbReference>
<dbReference type="InterPro" id="IPR029065">
    <property type="entry name" value="Enolase_C-like"/>
</dbReference>
<dbReference type="InterPro" id="IPR023444">
    <property type="entry name" value="L-Rhamnon_dehydrat"/>
</dbReference>
<dbReference type="InterPro" id="IPR018110">
    <property type="entry name" value="Mandel_Rmase/mucon_lact_enz_CS"/>
</dbReference>
<dbReference type="InterPro" id="IPR013342">
    <property type="entry name" value="Mandelate_racemase_C"/>
</dbReference>
<dbReference type="InterPro" id="IPR013341">
    <property type="entry name" value="Mandelate_racemase_N_dom"/>
</dbReference>
<dbReference type="InterPro" id="IPR046945">
    <property type="entry name" value="RHMD-like"/>
</dbReference>
<dbReference type="NCBIfam" id="NF011968">
    <property type="entry name" value="PRK15440.1"/>
    <property type="match status" value="1"/>
</dbReference>
<dbReference type="PANTHER" id="PTHR13794">
    <property type="entry name" value="ENOLASE SUPERFAMILY, MANDELATE RACEMASE"/>
    <property type="match status" value="1"/>
</dbReference>
<dbReference type="PANTHER" id="PTHR13794:SF58">
    <property type="entry name" value="MITOCHONDRIAL ENOLASE SUPERFAMILY MEMBER 1"/>
    <property type="match status" value="1"/>
</dbReference>
<dbReference type="Pfam" id="PF13378">
    <property type="entry name" value="MR_MLE_C"/>
    <property type="match status" value="1"/>
</dbReference>
<dbReference type="Pfam" id="PF02746">
    <property type="entry name" value="MR_MLE_N"/>
    <property type="match status" value="1"/>
</dbReference>
<dbReference type="SFLD" id="SFLDG00179">
    <property type="entry name" value="mandelate_racemase"/>
    <property type="match status" value="1"/>
</dbReference>
<dbReference type="SFLD" id="SFLDF00006">
    <property type="entry name" value="rhamnonate_dehydratase"/>
    <property type="match status" value="1"/>
</dbReference>
<dbReference type="SMART" id="SM00922">
    <property type="entry name" value="MR_MLE"/>
    <property type="match status" value="1"/>
</dbReference>
<dbReference type="SUPFAM" id="SSF51604">
    <property type="entry name" value="Enolase C-terminal domain-like"/>
    <property type="match status" value="1"/>
</dbReference>
<dbReference type="SUPFAM" id="SSF54826">
    <property type="entry name" value="Enolase N-terminal domain-like"/>
    <property type="match status" value="1"/>
</dbReference>
<dbReference type="PROSITE" id="PS00908">
    <property type="entry name" value="MR_MLE_1"/>
    <property type="match status" value="1"/>
</dbReference>
<evidence type="ECO:0000255" key="1">
    <source>
        <dbReference type="HAMAP-Rule" id="MF_01288"/>
    </source>
</evidence>
<keyword id="KW-0456">Lyase</keyword>
<keyword id="KW-0460">Magnesium</keyword>
<keyword id="KW-0479">Metal-binding</keyword>
<proteinExistence type="inferred from homology"/>
<gene>
    <name evidence="1" type="primary">rhmD</name>
    <name type="ordered locus">ECDH10B_2407</name>
</gene>